<comment type="function">
    <text>May be involved in cell cycle regulation by chromatin remodeling.</text>
</comment>
<comment type="subcellular location">
    <subcellularLocation>
        <location evidence="3">Nucleus</location>
    </subcellularLocation>
</comment>
<comment type="tissue specificity">
    <text evidence="2">In the retina, mainly expressed in the inner retina with strong signals reaching up to the outer plexiform layer (at protein level).</text>
</comment>
<gene>
    <name type="primary">Rcbtb1</name>
</gene>
<dbReference type="EMBL" id="AK033501">
    <property type="protein sequence ID" value="BAC28324.1"/>
    <property type="molecule type" value="mRNA"/>
</dbReference>
<dbReference type="EMBL" id="AK088299">
    <property type="protein sequence ID" value="BAC40268.1"/>
    <property type="molecule type" value="mRNA"/>
</dbReference>
<dbReference type="EMBL" id="BC067005">
    <property type="protein sequence ID" value="AAH67005.1"/>
    <property type="molecule type" value="mRNA"/>
</dbReference>
<dbReference type="CCDS" id="CCDS27168.1"/>
<dbReference type="RefSeq" id="NP_082040.2">
    <property type="nucleotide sequence ID" value="NM_027764.2"/>
</dbReference>
<dbReference type="RefSeq" id="XP_006519629.1">
    <property type="nucleotide sequence ID" value="XM_006519566.2"/>
</dbReference>
<dbReference type="RefSeq" id="XP_006519630.1">
    <property type="nucleotide sequence ID" value="XM_006519567.2"/>
</dbReference>
<dbReference type="RefSeq" id="XP_006519631.1">
    <property type="nucleotide sequence ID" value="XM_006519568.2"/>
</dbReference>
<dbReference type="RefSeq" id="XP_006519632.1">
    <property type="nucleotide sequence ID" value="XM_006519569.2"/>
</dbReference>
<dbReference type="RefSeq" id="XP_017171693.1">
    <property type="nucleotide sequence ID" value="XM_017316204.1"/>
</dbReference>
<dbReference type="RefSeq" id="XP_017171694.1">
    <property type="nucleotide sequence ID" value="XM_017316205.1"/>
</dbReference>
<dbReference type="SMR" id="Q6NXM2"/>
<dbReference type="BioGRID" id="214641">
    <property type="interactions" value="1"/>
</dbReference>
<dbReference type="FunCoup" id="Q6NXM2">
    <property type="interactions" value="592"/>
</dbReference>
<dbReference type="IntAct" id="Q6NXM2">
    <property type="interactions" value="1"/>
</dbReference>
<dbReference type="STRING" id="10090.ENSMUSP00000022551"/>
<dbReference type="iPTMnet" id="Q6NXM2"/>
<dbReference type="PhosphoSitePlus" id="Q6NXM2"/>
<dbReference type="PaxDb" id="10090-ENSMUSP00000037030"/>
<dbReference type="PeptideAtlas" id="Q6NXM2"/>
<dbReference type="ProteomicsDB" id="255052"/>
<dbReference type="Pumba" id="Q6NXM2"/>
<dbReference type="DNASU" id="71330"/>
<dbReference type="GeneID" id="71330"/>
<dbReference type="KEGG" id="mmu:71330"/>
<dbReference type="UCSC" id="uc007ueb.2">
    <property type="organism name" value="mouse"/>
</dbReference>
<dbReference type="AGR" id="MGI:1918580"/>
<dbReference type="CTD" id="55213"/>
<dbReference type="MGI" id="MGI:1918580">
    <property type="gene designation" value="Rcbtb1"/>
</dbReference>
<dbReference type="eggNOG" id="KOG1426">
    <property type="taxonomic scope" value="Eukaryota"/>
</dbReference>
<dbReference type="InParanoid" id="Q6NXM2"/>
<dbReference type="OrthoDB" id="16281at2759"/>
<dbReference type="PhylomeDB" id="Q6NXM2"/>
<dbReference type="TreeFam" id="TF329478"/>
<dbReference type="BioGRID-ORCS" id="71330">
    <property type="hits" value="1 hit in 76 CRISPR screens"/>
</dbReference>
<dbReference type="ChiTaRS" id="Rcbtb1">
    <property type="organism name" value="mouse"/>
</dbReference>
<dbReference type="PRO" id="PR:Q6NXM2"/>
<dbReference type="Proteomes" id="UP000000589">
    <property type="component" value="Unplaced"/>
</dbReference>
<dbReference type="RNAct" id="Q6NXM2">
    <property type="molecule type" value="protein"/>
</dbReference>
<dbReference type="GO" id="GO:0005634">
    <property type="term" value="C:nucleus"/>
    <property type="evidence" value="ECO:0007669"/>
    <property type="project" value="UniProtKB-SubCell"/>
</dbReference>
<dbReference type="GO" id="GO:0006325">
    <property type="term" value="P:chromatin organization"/>
    <property type="evidence" value="ECO:0007669"/>
    <property type="project" value="UniProtKB-KW"/>
</dbReference>
<dbReference type="CDD" id="cd18528">
    <property type="entry name" value="BACK_RCBTB1"/>
    <property type="match status" value="1"/>
</dbReference>
<dbReference type="CDD" id="cd18353">
    <property type="entry name" value="BTB_POZ_RCBTB1_CLLD7"/>
    <property type="match status" value="1"/>
</dbReference>
<dbReference type="FunFam" id="2.130.10.30:FF:000010">
    <property type="entry name" value="RCC1 and BTB domain-containing protein 1 isoform X2"/>
    <property type="match status" value="1"/>
</dbReference>
<dbReference type="FunFam" id="3.30.710.10:FF:000034">
    <property type="entry name" value="RCC1 and BTB domain-containing protein 1 isoform X2"/>
    <property type="match status" value="1"/>
</dbReference>
<dbReference type="Gene3D" id="3.30.710.10">
    <property type="entry name" value="Potassium Channel Kv1.1, Chain A"/>
    <property type="match status" value="1"/>
</dbReference>
<dbReference type="Gene3D" id="2.130.10.30">
    <property type="entry name" value="Regulator of chromosome condensation 1/beta-lactamase-inhibitor protein II"/>
    <property type="match status" value="1"/>
</dbReference>
<dbReference type="InterPro" id="IPR000210">
    <property type="entry name" value="BTB/POZ_dom"/>
</dbReference>
<dbReference type="InterPro" id="IPR047996">
    <property type="entry name" value="RCBTB1_BTB_POZ"/>
</dbReference>
<dbReference type="InterPro" id="IPR009091">
    <property type="entry name" value="RCC1/BLIP-II"/>
</dbReference>
<dbReference type="InterPro" id="IPR000408">
    <property type="entry name" value="Reg_chr_condens"/>
</dbReference>
<dbReference type="InterPro" id="IPR051625">
    <property type="entry name" value="Signaling_Regulatory_Domain"/>
</dbReference>
<dbReference type="InterPro" id="IPR011333">
    <property type="entry name" value="SKP1/BTB/POZ_sf"/>
</dbReference>
<dbReference type="PANTHER" id="PTHR22872">
    <property type="entry name" value="BTK-BINDING PROTEIN-RELATED"/>
    <property type="match status" value="1"/>
</dbReference>
<dbReference type="PANTHER" id="PTHR22872:SF4">
    <property type="entry name" value="RCC1 AND BTB DOMAIN-CONTAINING PROTEIN 1 ISOFORM X1"/>
    <property type="match status" value="1"/>
</dbReference>
<dbReference type="Pfam" id="PF00651">
    <property type="entry name" value="BTB"/>
    <property type="match status" value="1"/>
</dbReference>
<dbReference type="Pfam" id="PF00415">
    <property type="entry name" value="RCC1"/>
    <property type="match status" value="5"/>
</dbReference>
<dbReference type="PRINTS" id="PR00633">
    <property type="entry name" value="RCCNDNSATION"/>
</dbReference>
<dbReference type="SMART" id="SM00225">
    <property type="entry name" value="BTB"/>
    <property type="match status" value="1"/>
</dbReference>
<dbReference type="SUPFAM" id="SSF54695">
    <property type="entry name" value="POZ domain"/>
    <property type="match status" value="1"/>
</dbReference>
<dbReference type="SUPFAM" id="SSF50985">
    <property type="entry name" value="RCC1/BLIP-II"/>
    <property type="match status" value="1"/>
</dbReference>
<dbReference type="PROSITE" id="PS50097">
    <property type="entry name" value="BTB"/>
    <property type="match status" value="1"/>
</dbReference>
<dbReference type="PROSITE" id="PS00626">
    <property type="entry name" value="RCC1_2"/>
    <property type="match status" value="1"/>
</dbReference>
<dbReference type="PROSITE" id="PS50012">
    <property type="entry name" value="RCC1_3"/>
    <property type="match status" value="5"/>
</dbReference>
<name>RCBT1_MOUSE</name>
<sequence length="531" mass="58379">MVDVGKWPIFTLLSPQEAGSIRKACVFGTSANEAIYVTDNDEVFVFGLNYSNCLGTGDNQSTLVPKKLEALCGKKIKSLSYGSGPHVLLTTEDGVVYAWGHNGYSQLGNGTTNQGIAPVQVCTNLLIKQVIEVACGSHHSMALAADGELFAWGYNNCGQVGSGSTANQPTPRKVTNCLHTKRVVNIACGQTSSMAVLDSGEVYGWGYNGNGQLGLGNNGNQLTPVRVAALHGMCVNQIVCGYAHTLALTDEGLLYAWGANTYGQLGTGSKNNLLSPTQIMVEKERVIEIAACHSTHTSAAKTQGGHVYMWGQCRGQSVILPHLTHFCCTDDVFACFGTPAVSWRLLSVEHEDFLTVAESLKKEFDSPEIADLKFRIDGKYIHVHKAVLKIRCEHFRSMFQSYWNEDMKEVIEIDQFSYPVYRAFLQYLYTDTVDLPPEDAIGLLDLATSYCENRLKRLCQHIIKRGITVENAFSLFSAAVRYDAEDLEEFCFKFCINHLTEVTQTAAFWQMDGPLLKEFIAKASKCGAFKN</sequence>
<keyword id="KW-0131">Cell cycle</keyword>
<keyword id="KW-0156">Chromatin regulator</keyword>
<keyword id="KW-0539">Nucleus</keyword>
<keyword id="KW-1185">Reference proteome</keyword>
<keyword id="KW-0677">Repeat</keyword>
<keyword id="KW-0804">Transcription</keyword>
<keyword id="KW-0805">Transcription regulation</keyword>
<proteinExistence type="evidence at protein level"/>
<protein>
    <recommendedName>
        <fullName>RCC1 and BTB domain-containing protein 1</fullName>
    </recommendedName>
    <alternativeName>
        <fullName>Regulator of chromosome condensation and BTB domain-containing protein 1</fullName>
    </alternativeName>
</protein>
<organism>
    <name type="scientific">Mus musculus</name>
    <name type="common">Mouse</name>
    <dbReference type="NCBI Taxonomy" id="10090"/>
    <lineage>
        <taxon>Eukaryota</taxon>
        <taxon>Metazoa</taxon>
        <taxon>Chordata</taxon>
        <taxon>Craniata</taxon>
        <taxon>Vertebrata</taxon>
        <taxon>Euteleostomi</taxon>
        <taxon>Mammalia</taxon>
        <taxon>Eutheria</taxon>
        <taxon>Euarchontoglires</taxon>
        <taxon>Glires</taxon>
        <taxon>Rodentia</taxon>
        <taxon>Myomorpha</taxon>
        <taxon>Muroidea</taxon>
        <taxon>Muridae</taxon>
        <taxon>Murinae</taxon>
        <taxon>Mus</taxon>
        <taxon>Mus</taxon>
    </lineage>
</organism>
<feature type="chain" id="PRO_0000206643" description="RCC1 and BTB domain-containing protein 1">
    <location>
        <begin position="1"/>
        <end position="531"/>
    </location>
</feature>
<feature type="repeat" description="RCC1 1">
    <location>
        <begin position="40"/>
        <end position="91"/>
    </location>
</feature>
<feature type="repeat" description="RCC1 2">
    <location>
        <begin position="93"/>
        <end position="145"/>
    </location>
</feature>
<feature type="repeat" description="RCC1 3">
    <location>
        <begin position="147"/>
        <end position="198"/>
    </location>
</feature>
<feature type="repeat" description="RCC1 4">
    <location>
        <begin position="199"/>
        <end position="250"/>
    </location>
</feature>
<feature type="repeat" description="RCC1 5">
    <location>
        <begin position="252"/>
        <end position="302"/>
    </location>
</feature>
<feature type="repeat" description="RCC1 6">
    <location>
        <begin position="304"/>
        <end position="356"/>
    </location>
</feature>
<feature type="domain" description="BTB 1" evidence="1">
    <location>
        <begin position="370"/>
        <end position="437"/>
    </location>
</feature>
<feature type="domain" description="BTB 2" evidence="1">
    <location>
        <begin position="470"/>
        <end position="499"/>
    </location>
</feature>
<feature type="sequence conflict" description="In Ref. 1; BAC40268." evidence="3" ref="1">
    <original>V</original>
    <variation>I</variation>
    <location>
        <position position="174"/>
    </location>
</feature>
<feature type="sequence conflict" description="In Ref. 1; BAC28324/BAC40268." evidence="3" ref="1">
    <original>I</original>
    <variation>T</variation>
    <location>
        <position position="369"/>
    </location>
</feature>
<accession>Q6NXM2</accession>
<accession>Q8BTZ6</accession>
<accession>Q8BZV0</accession>
<reference key="1">
    <citation type="journal article" date="2005" name="Science">
        <title>The transcriptional landscape of the mammalian genome.</title>
        <authorList>
            <person name="Carninci P."/>
            <person name="Kasukawa T."/>
            <person name="Katayama S."/>
            <person name="Gough J."/>
            <person name="Frith M.C."/>
            <person name="Maeda N."/>
            <person name="Oyama R."/>
            <person name="Ravasi T."/>
            <person name="Lenhard B."/>
            <person name="Wells C."/>
            <person name="Kodzius R."/>
            <person name="Shimokawa K."/>
            <person name="Bajic V.B."/>
            <person name="Brenner S.E."/>
            <person name="Batalov S."/>
            <person name="Forrest A.R."/>
            <person name="Zavolan M."/>
            <person name="Davis M.J."/>
            <person name="Wilming L.G."/>
            <person name="Aidinis V."/>
            <person name="Allen J.E."/>
            <person name="Ambesi-Impiombato A."/>
            <person name="Apweiler R."/>
            <person name="Aturaliya R.N."/>
            <person name="Bailey T.L."/>
            <person name="Bansal M."/>
            <person name="Baxter L."/>
            <person name="Beisel K.W."/>
            <person name="Bersano T."/>
            <person name="Bono H."/>
            <person name="Chalk A.M."/>
            <person name="Chiu K.P."/>
            <person name="Choudhary V."/>
            <person name="Christoffels A."/>
            <person name="Clutterbuck D.R."/>
            <person name="Crowe M.L."/>
            <person name="Dalla E."/>
            <person name="Dalrymple B.P."/>
            <person name="de Bono B."/>
            <person name="Della Gatta G."/>
            <person name="di Bernardo D."/>
            <person name="Down T."/>
            <person name="Engstrom P."/>
            <person name="Fagiolini M."/>
            <person name="Faulkner G."/>
            <person name="Fletcher C.F."/>
            <person name="Fukushima T."/>
            <person name="Furuno M."/>
            <person name="Futaki S."/>
            <person name="Gariboldi M."/>
            <person name="Georgii-Hemming P."/>
            <person name="Gingeras T.R."/>
            <person name="Gojobori T."/>
            <person name="Green R.E."/>
            <person name="Gustincich S."/>
            <person name="Harbers M."/>
            <person name="Hayashi Y."/>
            <person name="Hensch T.K."/>
            <person name="Hirokawa N."/>
            <person name="Hill D."/>
            <person name="Huminiecki L."/>
            <person name="Iacono M."/>
            <person name="Ikeo K."/>
            <person name="Iwama A."/>
            <person name="Ishikawa T."/>
            <person name="Jakt M."/>
            <person name="Kanapin A."/>
            <person name="Katoh M."/>
            <person name="Kawasawa Y."/>
            <person name="Kelso J."/>
            <person name="Kitamura H."/>
            <person name="Kitano H."/>
            <person name="Kollias G."/>
            <person name="Krishnan S.P."/>
            <person name="Kruger A."/>
            <person name="Kummerfeld S.K."/>
            <person name="Kurochkin I.V."/>
            <person name="Lareau L.F."/>
            <person name="Lazarevic D."/>
            <person name="Lipovich L."/>
            <person name="Liu J."/>
            <person name="Liuni S."/>
            <person name="McWilliam S."/>
            <person name="Madan Babu M."/>
            <person name="Madera M."/>
            <person name="Marchionni L."/>
            <person name="Matsuda H."/>
            <person name="Matsuzawa S."/>
            <person name="Miki H."/>
            <person name="Mignone F."/>
            <person name="Miyake S."/>
            <person name="Morris K."/>
            <person name="Mottagui-Tabar S."/>
            <person name="Mulder N."/>
            <person name="Nakano N."/>
            <person name="Nakauchi H."/>
            <person name="Ng P."/>
            <person name="Nilsson R."/>
            <person name="Nishiguchi S."/>
            <person name="Nishikawa S."/>
            <person name="Nori F."/>
            <person name="Ohara O."/>
            <person name="Okazaki Y."/>
            <person name="Orlando V."/>
            <person name="Pang K.C."/>
            <person name="Pavan W.J."/>
            <person name="Pavesi G."/>
            <person name="Pesole G."/>
            <person name="Petrovsky N."/>
            <person name="Piazza S."/>
            <person name="Reed J."/>
            <person name="Reid J.F."/>
            <person name="Ring B.Z."/>
            <person name="Ringwald M."/>
            <person name="Rost B."/>
            <person name="Ruan Y."/>
            <person name="Salzberg S.L."/>
            <person name="Sandelin A."/>
            <person name="Schneider C."/>
            <person name="Schoenbach C."/>
            <person name="Sekiguchi K."/>
            <person name="Semple C.A."/>
            <person name="Seno S."/>
            <person name="Sessa L."/>
            <person name="Sheng Y."/>
            <person name="Shibata Y."/>
            <person name="Shimada H."/>
            <person name="Shimada K."/>
            <person name="Silva D."/>
            <person name="Sinclair B."/>
            <person name="Sperling S."/>
            <person name="Stupka E."/>
            <person name="Sugiura K."/>
            <person name="Sultana R."/>
            <person name="Takenaka Y."/>
            <person name="Taki K."/>
            <person name="Tammoja K."/>
            <person name="Tan S.L."/>
            <person name="Tang S."/>
            <person name="Taylor M.S."/>
            <person name="Tegner J."/>
            <person name="Teichmann S.A."/>
            <person name="Ueda H.R."/>
            <person name="van Nimwegen E."/>
            <person name="Verardo R."/>
            <person name="Wei C.L."/>
            <person name="Yagi K."/>
            <person name="Yamanishi H."/>
            <person name="Zabarovsky E."/>
            <person name="Zhu S."/>
            <person name="Zimmer A."/>
            <person name="Hide W."/>
            <person name="Bult C."/>
            <person name="Grimmond S.M."/>
            <person name="Teasdale R.D."/>
            <person name="Liu E.T."/>
            <person name="Brusic V."/>
            <person name="Quackenbush J."/>
            <person name="Wahlestedt C."/>
            <person name="Mattick J.S."/>
            <person name="Hume D.A."/>
            <person name="Kai C."/>
            <person name="Sasaki D."/>
            <person name="Tomaru Y."/>
            <person name="Fukuda S."/>
            <person name="Kanamori-Katayama M."/>
            <person name="Suzuki M."/>
            <person name="Aoki J."/>
            <person name="Arakawa T."/>
            <person name="Iida J."/>
            <person name="Imamura K."/>
            <person name="Itoh M."/>
            <person name="Kato T."/>
            <person name="Kawaji H."/>
            <person name="Kawagashira N."/>
            <person name="Kawashima T."/>
            <person name="Kojima M."/>
            <person name="Kondo S."/>
            <person name="Konno H."/>
            <person name="Nakano K."/>
            <person name="Ninomiya N."/>
            <person name="Nishio T."/>
            <person name="Okada M."/>
            <person name="Plessy C."/>
            <person name="Shibata K."/>
            <person name="Shiraki T."/>
            <person name="Suzuki S."/>
            <person name="Tagami M."/>
            <person name="Waki K."/>
            <person name="Watahiki A."/>
            <person name="Okamura-Oho Y."/>
            <person name="Suzuki H."/>
            <person name="Kawai J."/>
            <person name="Hayashizaki Y."/>
        </authorList>
    </citation>
    <scope>NUCLEOTIDE SEQUENCE [LARGE SCALE MRNA]</scope>
    <source>
        <strain>C57BL/6J</strain>
        <strain>NOD</strain>
        <tissue>Colon</tissue>
        <tissue>Thymus</tissue>
    </source>
</reference>
<reference key="2">
    <citation type="journal article" date="2004" name="Genome Res.">
        <title>The status, quality, and expansion of the NIH full-length cDNA project: the Mammalian Gene Collection (MGC).</title>
        <authorList>
            <consortium name="The MGC Project Team"/>
        </authorList>
    </citation>
    <scope>NUCLEOTIDE SEQUENCE [LARGE SCALE MRNA]</scope>
    <source>
        <strain>C57BL/6J</strain>
        <tissue>Brain</tissue>
    </source>
</reference>
<reference key="3">
    <citation type="journal article" date="2016" name="Am. J. Hum. Genet.">
        <title>Isolated and syndromic retinal dystrophy caused by biallelic mutations in RCBTB1, a gene implicated in ubiquitination.</title>
        <authorList>
            <person name="Coppieters F."/>
            <person name="Ascari G."/>
            <person name="Dannhausen K."/>
            <person name="Nikopoulos K."/>
            <person name="Peelman F."/>
            <person name="Karlstetter M."/>
            <person name="Xu M."/>
            <person name="Brachet C."/>
            <person name="Meunier I."/>
            <person name="Tsilimbaris M.K."/>
            <person name="Tsika C."/>
            <person name="Blazaki S.V."/>
            <person name="Vergult S."/>
            <person name="Farinelli P."/>
            <person name="Van Laethem T."/>
            <person name="Bauwens M."/>
            <person name="De Bruyne M."/>
            <person name="Chen R."/>
            <person name="Langmann T."/>
            <person name="Sui R."/>
            <person name="Meire F."/>
            <person name="Rivolta C."/>
            <person name="Hamel C.P."/>
            <person name="Leroy B.P."/>
            <person name="De Baere E."/>
        </authorList>
    </citation>
    <scope>TISSUE SPECIFICITY</scope>
</reference>
<evidence type="ECO:0000255" key="1">
    <source>
        <dbReference type="PROSITE-ProRule" id="PRU00037"/>
    </source>
</evidence>
<evidence type="ECO:0000269" key="2">
    <source>
    </source>
</evidence>
<evidence type="ECO:0000305" key="3"/>